<protein>
    <recommendedName>
        <fullName evidence="1">L-rhamnonate dehydratase</fullName>
        <shortName evidence="1">RhamD</shortName>
        <ecNumber evidence="1">4.2.1.90</ecNumber>
    </recommendedName>
</protein>
<reference key="1">
    <citation type="journal article" date="2008" name="J. Bacteriol.">
        <title>Insights into the environmental resistance gene pool from the genome sequence of the multidrug-resistant environmental isolate Escherichia coli SMS-3-5.</title>
        <authorList>
            <person name="Fricke W.F."/>
            <person name="Wright M.S."/>
            <person name="Lindell A.H."/>
            <person name="Harkins D.M."/>
            <person name="Baker-Austin C."/>
            <person name="Ravel J."/>
            <person name="Stepanauskas R."/>
        </authorList>
    </citation>
    <scope>NUCLEOTIDE SEQUENCE [LARGE SCALE GENOMIC DNA]</scope>
    <source>
        <strain>SMS-3-5 / SECEC</strain>
    </source>
</reference>
<comment type="function">
    <text evidence="1">Catalyzes the dehydration of L-rhamnonate to 2-keto-3-deoxy-L-rhamnonate (KDR).</text>
</comment>
<comment type="catalytic activity">
    <reaction evidence="1">
        <text>L-rhamnonate = 2-dehydro-3-deoxy-L-rhamnonate + H2O</text>
        <dbReference type="Rhea" id="RHEA:23080"/>
        <dbReference type="ChEBI" id="CHEBI:15377"/>
        <dbReference type="ChEBI" id="CHEBI:58118"/>
        <dbReference type="ChEBI" id="CHEBI:58371"/>
        <dbReference type="EC" id="4.2.1.90"/>
    </reaction>
</comment>
<comment type="cofactor">
    <cofactor evidence="1">
        <name>Mg(2+)</name>
        <dbReference type="ChEBI" id="CHEBI:18420"/>
    </cofactor>
    <text evidence="1">Binds 1 Mg(2+) ion per subunit.</text>
</comment>
<comment type="subunit">
    <text evidence="1">Homooctamer; tetramer of dimers.</text>
</comment>
<comment type="miscellaneous">
    <text evidence="1">Reaction proceeds via a syn dehydration.</text>
</comment>
<comment type="similarity">
    <text evidence="1">Belongs to the mandelate racemase/muconate lactonizing enzyme family. RhamD subfamily.</text>
</comment>
<comment type="sequence caution" evidence="2">
    <conflict type="erroneous initiation">
        <sequence resource="EMBL-CDS" id="ACB19290"/>
    </conflict>
</comment>
<sequence>MENSMTLPKIKQVRAWFTGGATAEKGAGGGDYHDQGANHWIDDHIATPMSKYRDYEQSRQSFGINVLGTLIVEVEAENGQTGFAVSTAGEMGCFIVEKHLNRFIEGKCVSDIKLIHDQMLNATLYYSGSGGLVMNTISCVDLALWDLFGKVVGLPVYKLLGGAVRDEIQFYATGARPDLAKEMGFIGGKMPTHWGPHDGDAGIRKDAAMVADMREKCGEDFWLMLDCWMSQDVNYATKLAHACAPYNLKWIEECLPPQQYEGYRELKRNAPAGMMVTSGEHHGTLQSFRTLSETGIDIMQPDVGWCGGLTTLVEIAAIAKSRGQLVVPHGSSVYSHHAVITFTNTPFSEFLMTSPDCSTMRPQFDPILLNEPVPVNGRIHKSVLDKPGFGVELNRDCNLKRPYSH</sequence>
<proteinExistence type="inferred from homology"/>
<accession>B1LLK1</accession>
<organism>
    <name type="scientific">Escherichia coli (strain SMS-3-5 / SECEC)</name>
    <dbReference type="NCBI Taxonomy" id="439855"/>
    <lineage>
        <taxon>Bacteria</taxon>
        <taxon>Pseudomonadati</taxon>
        <taxon>Pseudomonadota</taxon>
        <taxon>Gammaproteobacteria</taxon>
        <taxon>Enterobacterales</taxon>
        <taxon>Enterobacteriaceae</taxon>
        <taxon>Escherichia</taxon>
    </lineage>
</organism>
<name>RHMD_ECOSM</name>
<keyword id="KW-0456">Lyase</keyword>
<keyword id="KW-0460">Magnesium</keyword>
<keyword id="KW-0479">Metal-binding</keyword>
<feature type="chain" id="PRO_0000351693" description="L-rhamnonate dehydratase">
    <location>
        <begin position="1"/>
        <end position="405"/>
    </location>
</feature>
<feature type="active site" description="Proton acceptor" evidence="1">
    <location>
        <position position="329"/>
    </location>
</feature>
<feature type="binding site" evidence="1">
    <location>
        <position position="33"/>
    </location>
    <ligand>
        <name>substrate</name>
    </ligand>
</feature>
<feature type="binding site" evidence="1">
    <location>
        <position position="59"/>
    </location>
    <ligand>
        <name>substrate</name>
    </ligand>
</feature>
<feature type="binding site" evidence="1">
    <location>
        <position position="226"/>
    </location>
    <ligand>
        <name>Mg(2+)</name>
        <dbReference type="ChEBI" id="CHEBI:18420"/>
    </ligand>
</feature>
<feature type="binding site" evidence="1">
    <location>
        <position position="252"/>
    </location>
    <ligand>
        <name>Mg(2+)</name>
        <dbReference type="ChEBI" id="CHEBI:18420"/>
    </ligand>
</feature>
<feature type="binding site" evidence="1">
    <location>
        <position position="280"/>
    </location>
    <ligand>
        <name>Mg(2+)</name>
        <dbReference type="ChEBI" id="CHEBI:18420"/>
    </ligand>
</feature>
<feature type="binding site" evidence="1">
    <location>
        <position position="349"/>
    </location>
    <ligand>
        <name>substrate</name>
    </ligand>
</feature>
<feature type="site" description="Increases basicity of active site His" evidence="1">
    <location>
        <position position="302"/>
    </location>
</feature>
<feature type="site" description="Transition state stabilizer" evidence="1">
    <location>
        <position position="349"/>
    </location>
</feature>
<dbReference type="EC" id="4.2.1.90" evidence="1"/>
<dbReference type="EMBL" id="CP000970">
    <property type="protein sequence ID" value="ACB19290.1"/>
    <property type="status" value="ALT_INIT"/>
    <property type="molecule type" value="Genomic_DNA"/>
</dbReference>
<dbReference type="SMR" id="B1LLK1"/>
<dbReference type="KEGG" id="ecm:EcSMS35_2401"/>
<dbReference type="HOGENOM" id="CLU_030273_1_0_6"/>
<dbReference type="Proteomes" id="UP000007011">
    <property type="component" value="Chromosome"/>
</dbReference>
<dbReference type="GO" id="GO:0050032">
    <property type="term" value="F:L-rhamnonate dehydratase activity"/>
    <property type="evidence" value="ECO:0007669"/>
    <property type="project" value="UniProtKB-UniRule"/>
</dbReference>
<dbReference type="GO" id="GO:0000287">
    <property type="term" value="F:magnesium ion binding"/>
    <property type="evidence" value="ECO:0007669"/>
    <property type="project" value="UniProtKB-UniRule"/>
</dbReference>
<dbReference type="GO" id="GO:0009063">
    <property type="term" value="P:amino acid catabolic process"/>
    <property type="evidence" value="ECO:0007669"/>
    <property type="project" value="InterPro"/>
</dbReference>
<dbReference type="GO" id="GO:0016052">
    <property type="term" value="P:carbohydrate catabolic process"/>
    <property type="evidence" value="ECO:0007669"/>
    <property type="project" value="TreeGrafter"/>
</dbReference>
<dbReference type="CDD" id="cd03327">
    <property type="entry name" value="MR_like_2"/>
    <property type="match status" value="1"/>
</dbReference>
<dbReference type="FunFam" id="3.30.390.10:FF:000007">
    <property type="entry name" value="L-rhamnonate dehydratase"/>
    <property type="match status" value="1"/>
</dbReference>
<dbReference type="FunFam" id="3.20.20.120:FF:000005">
    <property type="entry name" value="Putative L-rhamnonate dehydratase"/>
    <property type="match status" value="1"/>
</dbReference>
<dbReference type="Gene3D" id="3.20.20.120">
    <property type="entry name" value="Enolase-like C-terminal domain"/>
    <property type="match status" value="1"/>
</dbReference>
<dbReference type="Gene3D" id="3.30.390.10">
    <property type="entry name" value="Enolase-like, N-terminal domain"/>
    <property type="match status" value="1"/>
</dbReference>
<dbReference type="HAMAP" id="MF_01288">
    <property type="entry name" value="Rhamnon_dehydrat"/>
    <property type="match status" value="1"/>
</dbReference>
<dbReference type="InterPro" id="IPR036849">
    <property type="entry name" value="Enolase-like_C_sf"/>
</dbReference>
<dbReference type="InterPro" id="IPR029017">
    <property type="entry name" value="Enolase-like_N"/>
</dbReference>
<dbReference type="InterPro" id="IPR029065">
    <property type="entry name" value="Enolase_C-like"/>
</dbReference>
<dbReference type="InterPro" id="IPR023444">
    <property type="entry name" value="L-Rhamnon_dehydrat"/>
</dbReference>
<dbReference type="InterPro" id="IPR018110">
    <property type="entry name" value="Mandel_Rmase/mucon_lact_enz_CS"/>
</dbReference>
<dbReference type="InterPro" id="IPR013342">
    <property type="entry name" value="Mandelate_racemase_C"/>
</dbReference>
<dbReference type="InterPro" id="IPR013341">
    <property type="entry name" value="Mandelate_racemase_N_dom"/>
</dbReference>
<dbReference type="InterPro" id="IPR046945">
    <property type="entry name" value="RHMD-like"/>
</dbReference>
<dbReference type="NCBIfam" id="NF011968">
    <property type="entry name" value="PRK15440.1"/>
    <property type="match status" value="1"/>
</dbReference>
<dbReference type="PANTHER" id="PTHR13794">
    <property type="entry name" value="ENOLASE SUPERFAMILY, MANDELATE RACEMASE"/>
    <property type="match status" value="1"/>
</dbReference>
<dbReference type="PANTHER" id="PTHR13794:SF58">
    <property type="entry name" value="MITOCHONDRIAL ENOLASE SUPERFAMILY MEMBER 1"/>
    <property type="match status" value="1"/>
</dbReference>
<dbReference type="Pfam" id="PF13378">
    <property type="entry name" value="MR_MLE_C"/>
    <property type="match status" value="1"/>
</dbReference>
<dbReference type="Pfam" id="PF02746">
    <property type="entry name" value="MR_MLE_N"/>
    <property type="match status" value="1"/>
</dbReference>
<dbReference type="SFLD" id="SFLDS00001">
    <property type="entry name" value="Enolase"/>
    <property type="match status" value="1"/>
</dbReference>
<dbReference type="SFLD" id="SFLDF00006">
    <property type="entry name" value="rhamnonate_dehydratase"/>
    <property type="match status" value="1"/>
</dbReference>
<dbReference type="SMART" id="SM00922">
    <property type="entry name" value="MR_MLE"/>
    <property type="match status" value="1"/>
</dbReference>
<dbReference type="SUPFAM" id="SSF51604">
    <property type="entry name" value="Enolase C-terminal domain-like"/>
    <property type="match status" value="1"/>
</dbReference>
<dbReference type="SUPFAM" id="SSF54826">
    <property type="entry name" value="Enolase N-terminal domain-like"/>
    <property type="match status" value="1"/>
</dbReference>
<dbReference type="PROSITE" id="PS00908">
    <property type="entry name" value="MR_MLE_1"/>
    <property type="match status" value="1"/>
</dbReference>
<evidence type="ECO:0000255" key="1">
    <source>
        <dbReference type="HAMAP-Rule" id="MF_01288"/>
    </source>
</evidence>
<evidence type="ECO:0000305" key="2"/>
<gene>
    <name evidence="1" type="primary">rhmD</name>
    <name type="ordered locus">EcSMS35_2401</name>
</gene>